<accession>B7LUN5</accession>
<sequence>MALWGGRFTQAADQRFKQFNDSLRFDYRLAEQDIVGSVAWSKALVTVGVLTAEEQVQLEEALNVLLEDVRARPQQILESDAEDIHSWVEGKLIDKVGQLGKKLHTGRSRNDQVATDLKLWCKDTVSELLTANRQLQSALVETAENNQDAVMPGYTHLQRAQPVTFAHWCLAYVEMLARDESRLQDALKRLDVSPLGCGALAGTAYEIDREQLAGWLGFASATRNSLDSVSDRDHVLELLSAAAIGMVHLSRFAEDLIFFNTGEAGFVELSDRVTSGSSLMPQKKNPDALELIRGKCGRVQGALTGMMMTLKGLPLAYNKDMQEDKEGLFDALDTWLDCLHMAALVLDGIQVKRPRCQEAAQQGYANATELADYLVAKGVPFREAHHIVGEAVVEAIRQGKPLEELPLSELQKFSQVIGEDVYPILSLQSCLDKRAAKGGVSPQQVAQAIAFAQARLG</sequence>
<reference key="1">
    <citation type="journal article" date="2009" name="PLoS Genet.">
        <title>Organised genome dynamics in the Escherichia coli species results in highly diverse adaptive paths.</title>
        <authorList>
            <person name="Touchon M."/>
            <person name="Hoede C."/>
            <person name="Tenaillon O."/>
            <person name="Barbe V."/>
            <person name="Baeriswyl S."/>
            <person name="Bidet P."/>
            <person name="Bingen E."/>
            <person name="Bonacorsi S."/>
            <person name="Bouchier C."/>
            <person name="Bouvet O."/>
            <person name="Calteau A."/>
            <person name="Chiapello H."/>
            <person name="Clermont O."/>
            <person name="Cruveiller S."/>
            <person name="Danchin A."/>
            <person name="Diard M."/>
            <person name="Dossat C."/>
            <person name="Karoui M.E."/>
            <person name="Frapy E."/>
            <person name="Garry L."/>
            <person name="Ghigo J.M."/>
            <person name="Gilles A.M."/>
            <person name="Johnson J."/>
            <person name="Le Bouguenec C."/>
            <person name="Lescat M."/>
            <person name="Mangenot S."/>
            <person name="Martinez-Jehanne V."/>
            <person name="Matic I."/>
            <person name="Nassif X."/>
            <person name="Oztas S."/>
            <person name="Petit M.A."/>
            <person name="Pichon C."/>
            <person name="Rouy Z."/>
            <person name="Ruf C.S."/>
            <person name="Schneider D."/>
            <person name="Tourret J."/>
            <person name="Vacherie B."/>
            <person name="Vallenet D."/>
            <person name="Medigue C."/>
            <person name="Rocha E.P.C."/>
            <person name="Denamur E."/>
        </authorList>
    </citation>
    <scope>NUCLEOTIDE SEQUENCE [LARGE SCALE GENOMIC DNA]</scope>
    <source>
        <strain>ATCC 35469 / DSM 13698 / BCRC 15582 / CCUG 18766 / IAM 14443 / JCM 21226 / LMG 7866 / NBRC 102419 / NCTC 12128 / CDC 0568-73</strain>
    </source>
</reference>
<organism>
    <name type="scientific">Escherichia fergusonii (strain ATCC 35469 / DSM 13698 / CCUG 18766 / IAM 14443 / JCM 21226 / LMG 7866 / NBRC 102419 / NCTC 12128 / CDC 0568-73)</name>
    <dbReference type="NCBI Taxonomy" id="585054"/>
    <lineage>
        <taxon>Bacteria</taxon>
        <taxon>Pseudomonadati</taxon>
        <taxon>Pseudomonadota</taxon>
        <taxon>Gammaproteobacteria</taxon>
        <taxon>Enterobacterales</taxon>
        <taxon>Enterobacteriaceae</taxon>
        <taxon>Escherichia</taxon>
    </lineage>
</organism>
<name>ARLY_ESCF3</name>
<proteinExistence type="inferred from homology"/>
<gene>
    <name evidence="1" type="primary">argH</name>
    <name type="ordered locus">EFER_3803</name>
</gene>
<keyword id="KW-0028">Amino-acid biosynthesis</keyword>
<keyword id="KW-0055">Arginine biosynthesis</keyword>
<keyword id="KW-0963">Cytoplasm</keyword>
<keyword id="KW-0456">Lyase</keyword>
<dbReference type="EC" id="4.3.2.1" evidence="1"/>
<dbReference type="EMBL" id="CU928158">
    <property type="protein sequence ID" value="CAQ91238.1"/>
    <property type="molecule type" value="Genomic_DNA"/>
</dbReference>
<dbReference type="RefSeq" id="WP_001230108.1">
    <property type="nucleotide sequence ID" value="NC_011740.1"/>
</dbReference>
<dbReference type="SMR" id="B7LUN5"/>
<dbReference type="GeneID" id="75059399"/>
<dbReference type="KEGG" id="efe:EFER_3803"/>
<dbReference type="HOGENOM" id="CLU_027272_2_3_6"/>
<dbReference type="OrthoDB" id="9769623at2"/>
<dbReference type="UniPathway" id="UPA00068">
    <property type="reaction ID" value="UER00114"/>
</dbReference>
<dbReference type="Proteomes" id="UP000000745">
    <property type="component" value="Chromosome"/>
</dbReference>
<dbReference type="GO" id="GO:0005829">
    <property type="term" value="C:cytosol"/>
    <property type="evidence" value="ECO:0007669"/>
    <property type="project" value="TreeGrafter"/>
</dbReference>
<dbReference type="GO" id="GO:0004056">
    <property type="term" value="F:argininosuccinate lyase activity"/>
    <property type="evidence" value="ECO:0007669"/>
    <property type="project" value="UniProtKB-UniRule"/>
</dbReference>
<dbReference type="GO" id="GO:0042450">
    <property type="term" value="P:arginine biosynthetic process via ornithine"/>
    <property type="evidence" value="ECO:0007669"/>
    <property type="project" value="InterPro"/>
</dbReference>
<dbReference type="GO" id="GO:0006526">
    <property type="term" value="P:L-arginine biosynthetic process"/>
    <property type="evidence" value="ECO:0007669"/>
    <property type="project" value="UniProtKB-UniRule"/>
</dbReference>
<dbReference type="CDD" id="cd01359">
    <property type="entry name" value="Argininosuccinate_lyase"/>
    <property type="match status" value="1"/>
</dbReference>
<dbReference type="FunFam" id="1.10.275.10:FF:000004">
    <property type="entry name" value="Argininosuccinate lyase"/>
    <property type="match status" value="1"/>
</dbReference>
<dbReference type="FunFam" id="1.10.40.30:FF:000001">
    <property type="entry name" value="Argininosuccinate lyase"/>
    <property type="match status" value="1"/>
</dbReference>
<dbReference type="FunFam" id="1.20.200.10:FF:000006">
    <property type="entry name" value="Argininosuccinate lyase"/>
    <property type="match status" value="1"/>
</dbReference>
<dbReference type="Gene3D" id="1.10.40.30">
    <property type="entry name" value="Fumarase/aspartase (C-terminal domain)"/>
    <property type="match status" value="1"/>
</dbReference>
<dbReference type="Gene3D" id="1.20.200.10">
    <property type="entry name" value="Fumarase/aspartase (Central domain)"/>
    <property type="match status" value="1"/>
</dbReference>
<dbReference type="Gene3D" id="1.10.275.10">
    <property type="entry name" value="Fumarase/aspartase (N-terminal domain)"/>
    <property type="match status" value="1"/>
</dbReference>
<dbReference type="HAMAP" id="MF_00006">
    <property type="entry name" value="Arg_succ_lyase"/>
    <property type="match status" value="1"/>
</dbReference>
<dbReference type="InterPro" id="IPR029419">
    <property type="entry name" value="Arg_succ_lyase_C"/>
</dbReference>
<dbReference type="InterPro" id="IPR009049">
    <property type="entry name" value="Argininosuccinate_lyase"/>
</dbReference>
<dbReference type="InterPro" id="IPR024083">
    <property type="entry name" value="Fumarase/histidase_N"/>
</dbReference>
<dbReference type="InterPro" id="IPR020557">
    <property type="entry name" value="Fumarate_lyase_CS"/>
</dbReference>
<dbReference type="InterPro" id="IPR000362">
    <property type="entry name" value="Fumarate_lyase_fam"/>
</dbReference>
<dbReference type="InterPro" id="IPR022761">
    <property type="entry name" value="Fumarate_lyase_N"/>
</dbReference>
<dbReference type="InterPro" id="IPR008948">
    <property type="entry name" value="L-Aspartase-like"/>
</dbReference>
<dbReference type="NCBIfam" id="TIGR00838">
    <property type="entry name" value="argH"/>
    <property type="match status" value="1"/>
</dbReference>
<dbReference type="NCBIfam" id="NF008964">
    <property type="entry name" value="PRK12308.1"/>
    <property type="match status" value="1"/>
</dbReference>
<dbReference type="PANTHER" id="PTHR43814">
    <property type="entry name" value="ARGININOSUCCINATE LYASE"/>
    <property type="match status" value="1"/>
</dbReference>
<dbReference type="PANTHER" id="PTHR43814:SF1">
    <property type="entry name" value="ARGININOSUCCINATE LYASE"/>
    <property type="match status" value="1"/>
</dbReference>
<dbReference type="Pfam" id="PF14698">
    <property type="entry name" value="ASL_C2"/>
    <property type="match status" value="1"/>
</dbReference>
<dbReference type="Pfam" id="PF00206">
    <property type="entry name" value="Lyase_1"/>
    <property type="match status" value="1"/>
</dbReference>
<dbReference type="PRINTS" id="PR00145">
    <property type="entry name" value="ARGSUCLYASE"/>
</dbReference>
<dbReference type="PRINTS" id="PR00149">
    <property type="entry name" value="FUMRATELYASE"/>
</dbReference>
<dbReference type="SUPFAM" id="SSF48557">
    <property type="entry name" value="L-aspartase-like"/>
    <property type="match status" value="1"/>
</dbReference>
<dbReference type="PROSITE" id="PS00163">
    <property type="entry name" value="FUMARATE_LYASES"/>
    <property type="match status" value="1"/>
</dbReference>
<evidence type="ECO:0000255" key="1">
    <source>
        <dbReference type="HAMAP-Rule" id="MF_00006"/>
    </source>
</evidence>
<comment type="catalytic activity">
    <reaction evidence="1">
        <text>2-(N(omega)-L-arginino)succinate = fumarate + L-arginine</text>
        <dbReference type="Rhea" id="RHEA:24020"/>
        <dbReference type="ChEBI" id="CHEBI:29806"/>
        <dbReference type="ChEBI" id="CHEBI:32682"/>
        <dbReference type="ChEBI" id="CHEBI:57472"/>
        <dbReference type="EC" id="4.3.2.1"/>
    </reaction>
</comment>
<comment type="pathway">
    <text evidence="1">Amino-acid biosynthesis; L-arginine biosynthesis; L-arginine from L-ornithine and carbamoyl phosphate: step 3/3.</text>
</comment>
<comment type="subcellular location">
    <subcellularLocation>
        <location evidence="1">Cytoplasm</location>
    </subcellularLocation>
</comment>
<comment type="similarity">
    <text evidence="1">Belongs to the lyase 1 family. Argininosuccinate lyase subfamily.</text>
</comment>
<protein>
    <recommendedName>
        <fullName evidence="1">Argininosuccinate lyase</fullName>
        <shortName evidence="1">ASAL</shortName>
        <ecNumber evidence="1">4.3.2.1</ecNumber>
    </recommendedName>
    <alternativeName>
        <fullName evidence="1">Arginosuccinase</fullName>
    </alternativeName>
</protein>
<feature type="chain" id="PRO_1000116208" description="Argininosuccinate lyase">
    <location>
        <begin position="1"/>
        <end position="457"/>
    </location>
</feature>